<gene>
    <name type="ORF">IIV6-295L</name>
</gene>
<comment type="subcellular location">
    <subcellularLocation>
        <location evidence="2">Membrane</location>
        <topology evidence="2">Single-pass membrane protein</topology>
    </subcellularLocation>
</comment>
<comment type="similarity">
    <text evidence="2">Belongs to the IIV-6 295L family.</text>
</comment>
<organismHost>
    <name type="scientific">Acheta domesticus</name>
    <name type="common">House cricket</name>
    <dbReference type="NCBI Taxonomy" id="6997"/>
</organismHost>
<organismHost>
    <name type="scientific">Chilo suppressalis</name>
    <name type="common">Asiatic rice borer moth</name>
    <dbReference type="NCBI Taxonomy" id="168631"/>
</organismHost>
<organismHost>
    <name type="scientific">Gryllus bimaculatus</name>
    <name type="common">Two-spotted cricket</name>
    <dbReference type="NCBI Taxonomy" id="6999"/>
</organismHost>
<organismHost>
    <name type="scientific">Gryllus campestris</name>
    <dbReference type="NCBI Taxonomy" id="58607"/>
</organismHost>
<organismHost>
    <name type="scientific">Spodoptera frugiperda</name>
    <name type="common">Fall armyworm</name>
    <dbReference type="NCBI Taxonomy" id="7108"/>
</organismHost>
<evidence type="ECO:0000255" key="1"/>
<evidence type="ECO:0000305" key="2"/>
<dbReference type="EMBL" id="AF303741">
    <property type="protein sequence ID" value="AAK82156.1"/>
    <property type="molecule type" value="Genomic_DNA"/>
</dbReference>
<dbReference type="RefSeq" id="NP_149758.1">
    <property type="nucleotide sequence ID" value="NC_003038.1"/>
</dbReference>
<dbReference type="KEGG" id="vg:1733357"/>
<dbReference type="Proteomes" id="UP000001359">
    <property type="component" value="Genome"/>
</dbReference>
<dbReference type="GO" id="GO:0016020">
    <property type="term" value="C:membrane"/>
    <property type="evidence" value="ECO:0007669"/>
    <property type="project" value="UniProtKB-SubCell"/>
</dbReference>
<dbReference type="InterPro" id="IPR043920">
    <property type="entry name" value="DUF5757"/>
</dbReference>
<dbReference type="Pfam" id="PF19061">
    <property type="entry name" value="DUF5757"/>
    <property type="match status" value="1"/>
</dbReference>
<accession>Q91FM9</accession>
<proteinExistence type="inferred from homology"/>
<organism>
    <name type="scientific">Invertebrate iridescent virus 6</name>
    <name type="common">IIV-6</name>
    <name type="synonym">Chilo iridescent virus</name>
    <dbReference type="NCBI Taxonomy" id="176652"/>
    <lineage>
        <taxon>Viruses</taxon>
        <taxon>Varidnaviria</taxon>
        <taxon>Bamfordvirae</taxon>
        <taxon>Nucleocytoviricota</taxon>
        <taxon>Megaviricetes</taxon>
        <taxon>Pimascovirales</taxon>
        <taxon>Iridoviridae</taxon>
        <taxon>Betairidovirinae</taxon>
        <taxon>Iridovirus</taxon>
    </lineage>
</organism>
<keyword id="KW-0472">Membrane</keyword>
<keyword id="KW-1185">Reference proteome</keyword>
<keyword id="KW-0812">Transmembrane</keyword>
<keyword id="KW-1133">Transmembrane helix</keyword>
<reference key="1">
    <citation type="journal article" date="2001" name="Virology">
        <title>Analysis of the first complete DNA sequence of an invertebrate iridovirus: coding strategy of the genome of Chilo iridescent virus.</title>
        <authorList>
            <person name="Jakob N.J."/>
            <person name="Mueller K."/>
            <person name="Bahr U."/>
            <person name="Darai G."/>
        </authorList>
    </citation>
    <scope>NUCLEOTIDE SEQUENCE [LARGE SCALE GENOMIC DNA]</scope>
</reference>
<reference key="2">
    <citation type="journal article" date="2007" name="Virol. J.">
        <title>Comparative genomic analysis of the family Iridoviridae: re-annotating and defining the core set of iridovirus genes.</title>
        <authorList>
            <person name="Eaton H.E."/>
            <person name="Metcalf J."/>
            <person name="Penny E."/>
            <person name="Tcherepanov V."/>
            <person name="Upton C."/>
            <person name="Brunetti C.R."/>
        </authorList>
    </citation>
    <scope>GENOME REANNOTATION</scope>
</reference>
<protein>
    <recommendedName>
        <fullName>Uncharacterized protein 295L</fullName>
    </recommendedName>
</protein>
<sequence>MLLNGKSFKIYDYDTQRTVIERIASVLRTIPKYLWYVNDAGNTKYTEEPNFIEETPNSITVINVILDIETQLLQSLSEFESRYSDWFIQSGNTGNSTEEESKEDLLKWFVIDFIRKNKNEGISEEHSILLLEEELKEGVGGREFDLNFPKKIWSDRSQIEKDYNKNVKENRTLSAQNEKRFKDLDKMPKASEEFSKFVVEKIKVSFTVTNYQTSMLSLFNIIDINKVEDSENSLFRIVTVTTANFFKINGLIDISEYKRIDPSQLIENSSSCIDNVLNIIIMNEPKQKREGKQSKRPEFIDITVKPNNESLLIEFDLSISIYNSEEDRNILKNYLIETLFPQNLGENLGENLGENLGGSQSLTPRFPEGKRRSQFPELKVGPTLENKVKGSYYIINRYFQKEIFLDMIMNDPDFSILYVDERFKVSKQQSRLYVYFVTTKTGVVAFSLLNQVILTENDPLFKIKTPDGKKLKVKVGTQYIKIRISSIENKLNIPFFQDHLNRLFSLYFKKYNSILQFYNLYIKITPGGLGIQDQQDINLNIDEPRINVPPRKKIGENTLAAQVPELFLPLYSRKCARAPRIVSEEEALELNQNNFQTIRFPIHSEGNLEPKIYACDHHKEHPYPGLKPNDLANKDTFKYLPCCYKTNPEHKRGSPYGNYYKGEALTKDMTDHELYKTPRIVPNKVFGILPTSIAKIFGKISQREIDEENDTTNYYRYGTMYGINSFIDAVARAIGNNQFENIYNERQTYISEIRKKMASESYIGLSRQETYDLNIEVVKKWIKSDQYFDPKRFLKIVEDYFDVTIFLFERNVGESIISKQEDDNFTITIDQISETVQKYGSGGQLSLPIHSTIGSYILRPLKNNIVFIYIHMGSEVDKVLYPQCETIIKYVTEQEPGRKKGTVKSLFHKHDHEVEVIKTLFDKLLLSYTSIMSGPNIPFTYEPINMILKDGYGLVLKEQFIDKSGKTRMLYASWVPKSSKTTLKEMLNEPAYFTIVTEPIHPLRLPIKQNKNKNENENLCIPLTDFHSLKTPIANHFEISPITNALVDDLMKIYNLNYKKASFKDYLCNASDYLKGQINGIKVRIYVSNSIEEMRRNDSTLLKYNKQRKISRILFEYVLYKFSQYIKSHNEYSKKEIFETFLLEKCLVDNSFIYKINQNFNVPFFTLFDNMFMVDSKIIFSSQNLMIRIMYNIYQLTVRKFNKVKELSNQTIMNTYFENLSDFNHNDNFFIVYGLNTFLRFVSETKQGELLLNTLQPFDGPRFFSSDDIEDGKIFSAFCYGSIDTAISNQLSDKDIDKTENGIIYIFDTINGYKAYQINYKGVKIVAFKVEDGDYYLTLKKTI</sequence>
<name>VF295_IIV6</name>
<feature type="chain" id="PRO_0000377846" description="Uncharacterized protein 295L">
    <location>
        <begin position="1"/>
        <end position="1343"/>
    </location>
</feature>
<feature type="transmembrane region" description="Helical" evidence="1">
    <location>
        <begin position="432"/>
        <end position="449"/>
    </location>
</feature>